<comment type="function">
    <text evidence="1">Methylates the class 1 translation termination release factors RF1/PrfA and RF2/PrfB on the glutamine residue of the universally conserved GGQ motif.</text>
</comment>
<comment type="catalytic activity">
    <reaction evidence="1">
        <text>L-glutaminyl-[peptide chain release factor] + S-adenosyl-L-methionine = N(5)-methyl-L-glutaminyl-[peptide chain release factor] + S-adenosyl-L-homocysteine + H(+)</text>
        <dbReference type="Rhea" id="RHEA:42896"/>
        <dbReference type="Rhea" id="RHEA-COMP:10271"/>
        <dbReference type="Rhea" id="RHEA-COMP:10272"/>
        <dbReference type="ChEBI" id="CHEBI:15378"/>
        <dbReference type="ChEBI" id="CHEBI:30011"/>
        <dbReference type="ChEBI" id="CHEBI:57856"/>
        <dbReference type="ChEBI" id="CHEBI:59789"/>
        <dbReference type="ChEBI" id="CHEBI:61891"/>
        <dbReference type="EC" id="2.1.1.297"/>
    </reaction>
</comment>
<comment type="similarity">
    <text evidence="1">Belongs to the protein N5-glutamine methyltransferase family. PrmC subfamily.</text>
</comment>
<proteinExistence type="inferred from homology"/>
<sequence length="283" mass="32517">MILKDLLIEGYGVLKKASIGSYQIDAQLLLGKVLKKDRLFILTNPDYHIKEEEKEKYFQLIDLRKNKMPIKYILGTTEFMGLNFNIKKGVLIPRPDTEILVETVLEEIKNKNYKQICDVCCGSGIIGITIGYTLNNTEIICYDIEDIPYNTTKENILKHNLQDRVKALKSDLLTEAIKEKRRFDLIVSNPPYIREDVIETLMDDVKKYEPFEALCGGKDGLFFYEGIIKQSLEVLNDGGTIAFEIGYDQKIQVSHILNEYGFKDVLCIKDLAGKDRVIKARKY</sequence>
<evidence type="ECO:0000255" key="1">
    <source>
        <dbReference type="HAMAP-Rule" id="MF_02126"/>
    </source>
</evidence>
<protein>
    <recommendedName>
        <fullName evidence="1">Release factor glutamine methyltransferase</fullName>
        <shortName evidence="1">RF MTase</shortName>
        <ecNumber evidence="1">2.1.1.297</ecNumber>
    </recommendedName>
    <alternativeName>
        <fullName evidence="1">N5-glutamine methyltransferase PrmC</fullName>
    </alternativeName>
    <alternativeName>
        <fullName evidence="1">Protein-(glutamine-N5) MTase PrmC</fullName>
    </alternativeName>
    <alternativeName>
        <fullName evidence="1">Protein-glutamine N-methyltransferase PrmC</fullName>
    </alternativeName>
</protein>
<gene>
    <name evidence="1" type="primary">prmC</name>
    <name type="ordered locus">CBO0138</name>
    <name type="ordered locus">CLC_0186</name>
</gene>
<feature type="chain" id="PRO_0000414513" description="Release factor glutamine methyltransferase">
    <location>
        <begin position="1"/>
        <end position="283"/>
    </location>
</feature>
<feature type="binding site" evidence="1">
    <location>
        <position position="143"/>
    </location>
    <ligand>
        <name>S-adenosyl-L-methionine</name>
        <dbReference type="ChEBI" id="CHEBI:59789"/>
    </ligand>
</feature>
<feature type="binding site" evidence="1">
    <location>
        <begin position="189"/>
        <end position="192"/>
    </location>
    <ligand>
        <name>substrate</name>
    </ligand>
</feature>
<feature type="binding site" evidence="1">
    <location>
        <position position="189"/>
    </location>
    <ligand>
        <name>S-adenosyl-L-methionine</name>
        <dbReference type="ChEBI" id="CHEBI:59789"/>
    </ligand>
</feature>
<organism>
    <name type="scientific">Clostridium botulinum (strain Hall / ATCC 3502 / NCTC 13319 / Type A)</name>
    <dbReference type="NCBI Taxonomy" id="441771"/>
    <lineage>
        <taxon>Bacteria</taxon>
        <taxon>Bacillati</taxon>
        <taxon>Bacillota</taxon>
        <taxon>Clostridia</taxon>
        <taxon>Eubacteriales</taxon>
        <taxon>Clostridiaceae</taxon>
        <taxon>Clostridium</taxon>
    </lineage>
</organism>
<accession>A5HY34</accession>
<accession>A7G054</accession>
<reference key="1">
    <citation type="journal article" date="2007" name="Genome Res.">
        <title>Genome sequence of a proteolytic (Group I) Clostridium botulinum strain Hall A and comparative analysis of the clostridial genomes.</title>
        <authorList>
            <person name="Sebaihia M."/>
            <person name="Peck M.W."/>
            <person name="Minton N.P."/>
            <person name="Thomson N.R."/>
            <person name="Holden M.T.G."/>
            <person name="Mitchell W.J."/>
            <person name="Carter A.T."/>
            <person name="Bentley S.D."/>
            <person name="Mason D.R."/>
            <person name="Crossman L."/>
            <person name="Paul C.J."/>
            <person name="Ivens A."/>
            <person name="Wells-Bennik M.H.J."/>
            <person name="Davis I.J."/>
            <person name="Cerdeno-Tarraga A.M."/>
            <person name="Churcher C."/>
            <person name="Quail M.A."/>
            <person name="Chillingworth T."/>
            <person name="Feltwell T."/>
            <person name="Fraser A."/>
            <person name="Goodhead I."/>
            <person name="Hance Z."/>
            <person name="Jagels K."/>
            <person name="Larke N."/>
            <person name="Maddison M."/>
            <person name="Moule S."/>
            <person name="Mungall K."/>
            <person name="Norbertczak H."/>
            <person name="Rabbinowitsch E."/>
            <person name="Sanders M."/>
            <person name="Simmonds M."/>
            <person name="White B."/>
            <person name="Whithead S."/>
            <person name="Parkhill J."/>
        </authorList>
    </citation>
    <scope>NUCLEOTIDE SEQUENCE [LARGE SCALE GENOMIC DNA]</scope>
    <source>
        <strain>Hall / ATCC 3502 / NCTC 13319 / Type A</strain>
    </source>
</reference>
<reference key="2">
    <citation type="journal article" date="2007" name="PLoS ONE">
        <title>Analysis of the neurotoxin complex genes in Clostridium botulinum A1-A4 and B1 strains: BoNT/A3, /Ba4 and /B1 clusters are located within plasmids.</title>
        <authorList>
            <person name="Smith T.J."/>
            <person name="Hill K.K."/>
            <person name="Foley B.T."/>
            <person name="Detter J.C."/>
            <person name="Munk A.C."/>
            <person name="Bruce D.C."/>
            <person name="Doggett N.A."/>
            <person name="Smith L.A."/>
            <person name="Marks J.D."/>
            <person name="Xie G."/>
            <person name="Brettin T.S."/>
        </authorList>
    </citation>
    <scope>NUCLEOTIDE SEQUENCE [LARGE SCALE GENOMIC DNA]</scope>
    <source>
        <strain>Hall / ATCC 3502 / NCTC 13319 / Type A</strain>
    </source>
</reference>
<name>PRMC_CLOBH</name>
<keyword id="KW-0489">Methyltransferase</keyword>
<keyword id="KW-1185">Reference proteome</keyword>
<keyword id="KW-0949">S-adenosyl-L-methionine</keyword>
<keyword id="KW-0808">Transferase</keyword>
<dbReference type="EC" id="2.1.1.297" evidence="1"/>
<dbReference type="EMBL" id="CP000727">
    <property type="protein sequence ID" value="ABS37388.1"/>
    <property type="molecule type" value="Genomic_DNA"/>
</dbReference>
<dbReference type="EMBL" id="AM412317">
    <property type="protein sequence ID" value="CAL81693.1"/>
    <property type="molecule type" value="Genomic_DNA"/>
</dbReference>
<dbReference type="RefSeq" id="WP_011947981.1">
    <property type="nucleotide sequence ID" value="NC_009698.1"/>
</dbReference>
<dbReference type="RefSeq" id="YP_001252685.1">
    <property type="nucleotide sequence ID" value="NC_009495.1"/>
</dbReference>
<dbReference type="RefSeq" id="YP_001386097.1">
    <property type="nucleotide sequence ID" value="NC_009698.1"/>
</dbReference>
<dbReference type="SMR" id="A5HY34"/>
<dbReference type="GeneID" id="5184393"/>
<dbReference type="KEGG" id="cbh:CLC_0186"/>
<dbReference type="KEGG" id="cbo:CBO0138"/>
<dbReference type="PATRIC" id="fig|413999.7.peg.137"/>
<dbReference type="HOGENOM" id="CLU_018398_3_2_9"/>
<dbReference type="PRO" id="PR:A5HY34"/>
<dbReference type="Proteomes" id="UP000001986">
    <property type="component" value="Chromosome"/>
</dbReference>
<dbReference type="GO" id="GO:0003676">
    <property type="term" value="F:nucleic acid binding"/>
    <property type="evidence" value="ECO:0007669"/>
    <property type="project" value="InterPro"/>
</dbReference>
<dbReference type="GO" id="GO:0102559">
    <property type="term" value="F:protein-(glutamine-N5) methyltransferase activity"/>
    <property type="evidence" value="ECO:0007669"/>
    <property type="project" value="UniProtKB-EC"/>
</dbReference>
<dbReference type="GO" id="GO:0036009">
    <property type="term" value="F:protein-glutamine N-methyltransferase activity"/>
    <property type="evidence" value="ECO:0000318"/>
    <property type="project" value="GO_Central"/>
</dbReference>
<dbReference type="GO" id="GO:0032259">
    <property type="term" value="P:methylation"/>
    <property type="evidence" value="ECO:0007669"/>
    <property type="project" value="UniProtKB-KW"/>
</dbReference>
<dbReference type="GO" id="GO:0006415">
    <property type="term" value="P:translational termination"/>
    <property type="evidence" value="ECO:0000318"/>
    <property type="project" value="GO_Central"/>
</dbReference>
<dbReference type="CDD" id="cd02440">
    <property type="entry name" value="AdoMet_MTases"/>
    <property type="match status" value="1"/>
</dbReference>
<dbReference type="Gene3D" id="1.10.8.10">
    <property type="entry name" value="DNA helicase RuvA subunit, C-terminal domain"/>
    <property type="match status" value="1"/>
</dbReference>
<dbReference type="Gene3D" id="3.40.50.150">
    <property type="entry name" value="Vaccinia Virus protein VP39"/>
    <property type="match status" value="1"/>
</dbReference>
<dbReference type="HAMAP" id="MF_02126">
    <property type="entry name" value="RF_methyltr_PrmC"/>
    <property type="match status" value="1"/>
</dbReference>
<dbReference type="InterPro" id="IPR002052">
    <property type="entry name" value="DNA_methylase_N6_adenine_CS"/>
</dbReference>
<dbReference type="InterPro" id="IPR004556">
    <property type="entry name" value="HemK-like"/>
</dbReference>
<dbReference type="InterPro" id="IPR050320">
    <property type="entry name" value="N5-glutamine_MTase"/>
</dbReference>
<dbReference type="InterPro" id="IPR040758">
    <property type="entry name" value="PrmC_N"/>
</dbReference>
<dbReference type="InterPro" id="IPR019874">
    <property type="entry name" value="RF_methyltr_PrmC"/>
</dbReference>
<dbReference type="InterPro" id="IPR029063">
    <property type="entry name" value="SAM-dependent_MTases_sf"/>
</dbReference>
<dbReference type="InterPro" id="IPR007848">
    <property type="entry name" value="Small_mtfrase_dom"/>
</dbReference>
<dbReference type="NCBIfam" id="TIGR00536">
    <property type="entry name" value="hemK_fam"/>
    <property type="match status" value="1"/>
</dbReference>
<dbReference type="NCBIfam" id="TIGR03534">
    <property type="entry name" value="RF_mod_PrmC"/>
    <property type="match status" value="1"/>
</dbReference>
<dbReference type="PANTHER" id="PTHR18895">
    <property type="entry name" value="HEMK METHYLTRANSFERASE"/>
    <property type="match status" value="1"/>
</dbReference>
<dbReference type="PANTHER" id="PTHR18895:SF74">
    <property type="entry name" value="MTRF1L RELEASE FACTOR GLUTAMINE METHYLTRANSFERASE"/>
    <property type="match status" value="1"/>
</dbReference>
<dbReference type="Pfam" id="PF05175">
    <property type="entry name" value="MTS"/>
    <property type="match status" value="1"/>
</dbReference>
<dbReference type="Pfam" id="PF17827">
    <property type="entry name" value="PrmC_N"/>
    <property type="match status" value="1"/>
</dbReference>
<dbReference type="PRINTS" id="PR00507">
    <property type="entry name" value="N12N6MTFRASE"/>
</dbReference>
<dbReference type="SUPFAM" id="SSF53335">
    <property type="entry name" value="S-adenosyl-L-methionine-dependent methyltransferases"/>
    <property type="match status" value="1"/>
</dbReference>